<accession>Q9BZK3</accession>
<protein>
    <recommendedName>
        <fullName evidence="5">Putative nascent polypeptide-associated complex subunit alpha-like protein</fullName>
    </recommendedName>
    <alternativeName>
        <fullName>Alpha-NAC pseudogene 1</fullName>
    </alternativeName>
    <alternativeName>
        <fullName>NAC-alpha pseudogene 1</fullName>
    </alternativeName>
    <alternativeName>
        <fullName evidence="6">NACA family member 4, pseudogene</fullName>
    </alternativeName>
</protein>
<dbReference type="EMBL" id="AF315951">
    <property type="protein sequence ID" value="AAG50269.1"/>
    <property type="molecule type" value="mRNA"/>
</dbReference>
<dbReference type="SMR" id="Q9BZK3"/>
<dbReference type="FunCoup" id="Q9BZK3">
    <property type="interactions" value="619"/>
</dbReference>
<dbReference type="IntAct" id="Q9BZK3">
    <property type="interactions" value="9"/>
</dbReference>
<dbReference type="MINT" id="Q9BZK3"/>
<dbReference type="iPTMnet" id="Q9BZK3"/>
<dbReference type="PhosphoSitePlus" id="Q9BZK3"/>
<dbReference type="BioMuta" id="HGNC:24688"/>
<dbReference type="DMDM" id="74717760"/>
<dbReference type="jPOST" id="Q9BZK3"/>
<dbReference type="MassIVE" id="Q9BZK3"/>
<dbReference type="ProteomicsDB" id="79863"/>
<dbReference type="Pumba" id="Q9BZK3"/>
<dbReference type="AGR" id="HGNC:24688"/>
<dbReference type="GeneCards" id="NACA4P"/>
<dbReference type="HGNC" id="HGNC:24688">
    <property type="gene designation" value="NACA4P"/>
</dbReference>
<dbReference type="neXtProt" id="NX_Q9BZK3"/>
<dbReference type="InParanoid" id="Q9BZK3"/>
<dbReference type="PAN-GO" id="Q9BZK3">
    <property type="GO annotations" value="3 GO annotations based on evolutionary models"/>
</dbReference>
<dbReference type="PathwayCommons" id="Q9BZK3"/>
<dbReference type="SignaLink" id="Q9BZK3"/>
<dbReference type="Pharos" id="Q9BZK3">
    <property type="development level" value="Tdark"/>
</dbReference>
<dbReference type="Proteomes" id="UP000005640">
    <property type="component" value="Unplaced"/>
</dbReference>
<dbReference type="RNAct" id="Q9BZK3">
    <property type="molecule type" value="protein"/>
</dbReference>
<dbReference type="GO" id="GO:0005737">
    <property type="term" value="C:cytoplasm"/>
    <property type="evidence" value="ECO:0000318"/>
    <property type="project" value="GO_Central"/>
</dbReference>
<dbReference type="GO" id="GO:0005854">
    <property type="term" value="C:nascent polypeptide-associated complex"/>
    <property type="evidence" value="ECO:0007669"/>
    <property type="project" value="InterPro"/>
</dbReference>
<dbReference type="GO" id="GO:0051082">
    <property type="term" value="F:unfolded protein binding"/>
    <property type="evidence" value="ECO:0000318"/>
    <property type="project" value="GO_Central"/>
</dbReference>
<dbReference type="GO" id="GO:0006612">
    <property type="term" value="P:protein targeting to membrane"/>
    <property type="evidence" value="ECO:0000318"/>
    <property type="project" value="GO_Central"/>
</dbReference>
<dbReference type="CDD" id="cd22054">
    <property type="entry name" value="NAC_NACA"/>
    <property type="match status" value="1"/>
</dbReference>
<dbReference type="CDD" id="cd14415">
    <property type="entry name" value="UBA_NACA_NACP1"/>
    <property type="match status" value="1"/>
</dbReference>
<dbReference type="FunFam" id="2.20.70.30:FF:000002">
    <property type="entry name" value="Nascent polypeptide-associated complex (NAC), alpha subunit"/>
    <property type="match status" value="1"/>
</dbReference>
<dbReference type="Gene3D" id="1.10.8.10">
    <property type="entry name" value="DNA helicase RuvA subunit, C-terminal domain"/>
    <property type="match status" value="1"/>
</dbReference>
<dbReference type="Gene3D" id="2.20.70.30">
    <property type="entry name" value="Nascent polypeptide-associated complex domain"/>
    <property type="match status" value="1"/>
</dbReference>
<dbReference type="InterPro" id="IPR016641">
    <property type="entry name" value="EGD2/NACA0like"/>
</dbReference>
<dbReference type="InterPro" id="IPR038187">
    <property type="entry name" value="NAC_A/B_dom_sf"/>
</dbReference>
<dbReference type="InterPro" id="IPR002715">
    <property type="entry name" value="Nas_poly-pep-assoc_cplx_dom"/>
</dbReference>
<dbReference type="PANTHER" id="PTHR21713">
    <property type="entry name" value="NASCENT POLYPEPTIDE ASSOCIATED COMPLEX ALPHA SUBUNIT-RELATED"/>
    <property type="match status" value="1"/>
</dbReference>
<dbReference type="Pfam" id="PF01849">
    <property type="entry name" value="NAC"/>
    <property type="match status" value="1"/>
</dbReference>
<dbReference type="PIRSF" id="PIRSF015901">
    <property type="entry name" value="NAC_alpha"/>
    <property type="match status" value="1"/>
</dbReference>
<dbReference type="SMART" id="SM01407">
    <property type="entry name" value="NAC"/>
    <property type="match status" value="1"/>
</dbReference>
<dbReference type="PROSITE" id="PS51151">
    <property type="entry name" value="NAC_AB"/>
    <property type="match status" value="1"/>
</dbReference>
<evidence type="ECO:0000250" key="1">
    <source>
        <dbReference type="UniProtKB" id="Q13765"/>
    </source>
</evidence>
<evidence type="ECO:0000250" key="2">
    <source>
        <dbReference type="UniProtKB" id="Q9H009"/>
    </source>
</evidence>
<evidence type="ECO:0000255" key="3">
    <source>
        <dbReference type="PROSITE-ProRule" id="PRU00507"/>
    </source>
</evidence>
<evidence type="ECO:0000256" key="4">
    <source>
        <dbReference type="SAM" id="MobiDB-lite"/>
    </source>
</evidence>
<evidence type="ECO:0000305" key="5"/>
<evidence type="ECO:0000312" key="6">
    <source>
        <dbReference type="HGNC" id="HGNC:24688"/>
    </source>
</evidence>
<name>NACP4_HUMAN</name>
<comment type="similarity">
    <text evidence="5">Belongs to the NAC-alpha family.</text>
</comment>
<comment type="caution">
    <text evidence="5">Could be the product of a pseudogene.</text>
</comment>
<feature type="chain" id="PRO_0000280747" description="Putative nascent polypeptide-associated complex subunit alpha-like protein">
    <location>
        <begin position="1"/>
        <end position="213"/>
    </location>
</feature>
<feature type="domain" description="NAC-A/B" evidence="3">
    <location>
        <begin position="69"/>
        <end position="134"/>
    </location>
</feature>
<feature type="domain" description="UBA">
    <location>
        <begin position="175"/>
        <end position="211"/>
    </location>
</feature>
<feature type="region of interest" description="Disordered" evidence="4">
    <location>
        <begin position="1"/>
        <end position="46"/>
    </location>
</feature>
<feature type="compositionally biased region" description="Polar residues" evidence="4">
    <location>
        <begin position="15"/>
        <end position="28"/>
    </location>
</feature>
<feature type="compositionally biased region" description="Acidic residues" evidence="4">
    <location>
        <begin position="29"/>
        <end position="42"/>
    </location>
</feature>
<feature type="modified residue" description="Phosphoserine" evidence="1">
    <location>
        <position position="43"/>
    </location>
</feature>
<feature type="modified residue" description="Phosphoserine" evidence="1">
    <location>
        <position position="131"/>
    </location>
</feature>
<feature type="modified residue" description="N6-acetyllysine; alternate" evidence="1">
    <location>
        <position position="141"/>
    </location>
</feature>
<feature type="modified residue" description="Phosphothreonine" evidence="1">
    <location>
        <position position="160"/>
    </location>
</feature>
<feature type="modified residue" description="Phosphoserine" evidence="1">
    <location>
        <position position="165"/>
    </location>
</feature>
<feature type="modified residue" description="Phosphoserine" evidence="1">
    <location>
        <position position="185"/>
    </location>
</feature>
<feature type="modified residue" description="Phosphoserine" evidence="1">
    <location>
        <position position="201"/>
    </location>
</feature>
<feature type="modified residue" description="Phosphothreonine" evidence="2">
    <location>
        <position position="212"/>
    </location>
</feature>
<feature type="cross-link" description="Glycyl lysine isopeptide (Lys-Gly) (interchain with G-Cter in SUMO2); alternate" evidence="1">
    <location>
        <position position="141"/>
    </location>
</feature>
<organism>
    <name type="scientific">Homo sapiens</name>
    <name type="common">Human</name>
    <dbReference type="NCBI Taxonomy" id="9606"/>
    <lineage>
        <taxon>Eukaryota</taxon>
        <taxon>Metazoa</taxon>
        <taxon>Chordata</taxon>
        <taxon>Craniata</taxon>
        <taxon>Vertebrata</taxon>
        <taxon>Euteleostomi</taxon>
        <taxon>Mammalia</taxon>
        <taxon>Eutheria</taxon>
        <taxon>Euarchontoglires</taxon>
        <taxon>Primates</taxon>
        <taxon>Haplorrhini</taxon>
        <taxon>Catarrhini</taxon>
        <taxon>Hominidae</taxon>
        <taxon>Homo</taxon>
    </lineage>
</organism>
<reference key="1">
    <citation type="submission" date="2000-10" db="EMBL/GenBank/DDBJ databases">
        <title>Cloning of FKSG17, a novel gene located on human chromosome 8.</title>
        <authorList>
            <person name="Wang Y.-G."/>
            <person name="Gong L."/>
        </authorList>
    </citation>
    <scope>NUCLEOTIDE SEQUENCE [MRNA]</scope>
</reference>
<reference key="2">
    <citation type="journal article" date="2011" name="BMC Syst. Biol.">
        <title>Initial characterization of the human central proteome.</title>
        <authorList>
            <person name="Burkard T.R."/>
            <person name="Planyavsky M."/>
            <person name="Kaupe I."/>
            <person name="Breitwieser F.P."/>
            <person name="Buerckstuemmer T."/>
            <person name="Bennett K.L."/>
            <person name="Superti-Furga G."/>
            <person name="Colinge J."/>
        </authorList>
    </citation>
    <scope>IDENTIFICATION BY MASS SPECTROMETRY [LARGE SCALE ANALYSIS]</scope>
</reference>
<proteinExistence type="uncertain"/>
<sequence>MPGEATETVPAIEQQLLQPQAETGSGTESDSDESVPELEEQDSTQVTAQVQLVVAAEIDEEPVSKAKQRRSEKKARKARFKLGLQQVTGVTRVTIRKSKNILFVITKPDVYKSPASDTYMVFGEAKIEDLSQEAQLAAAEKFKVQGEAVSNIQENTQTPTVQEGSEDEEVDETGVEIKDIELVLSQANVWGAKAVRALKNSNDIVNAIMELTM</sequence>
<gene>
    <name evidence="6" type="primary">NACA4P</name>
    <name evidence="6" type="synonym">NACAP1</name>
    <name type="ORF">FKSG17</name>
</gene>
<keyword id="KW-0007">Acetylation</keyword>
<keyword id="KW-1017">Isopeptide bond</keyword>
<keyword id="KW-0597">Phosphoprotein</keyword>
<keyword id="KW-1267">Proteomics identification</keyword>
<keyword id="KW-1185">Reference proteome</keyword>
<keyword id="KW-0832">Ubl conjugation</keyword>